<accession>B6DCY7</accession>
<feature type="signal peptide" evidence="2">
    <location>
        <begin position="1"/>
        <end position="20"/>
    </location>
</feature>
<feature type="propeptide" id="PRO_0000401793" evidence="1">
    <location>
        <begin position="21"/>
        <end position="26"/>
    </location>
</feature>
<feature type="chain" id="PRO_0000401794" description="U8-lycotoxin-Ls1g">
    <location>
        <begin position="27"/>
        <end position="77"/>
    </location>
</feature>
<keyword id="KW-1015">Disulfide bond</keyword>
<keyword id="KW-0964">Secreted</keyword>
<keyword id="KW-0732">Signal</keyword>
<keyword id="KW-0800">Toxin</keyword>
<reference key="1">
    <citation type="journal article" date="2010" name="Zoology">
        <title>Transcriptome analysis of the venom glands of the Chinese wolf spider Lycosa singoriensis.</title>
        <authorList>
            <person name="Zhang Y."/>
            <person name="Chen J."/>
            <person name="Tang X."/>
            <person name="Wang F."/>
            <person name="Jiang L."/>
            <person name="Xiong X."/>
            <person name="Wang M."/>
            <person name="Rong M."/>
            <person name="Liu Z."/>
            <person name="Liang S."/>
        </authorList>
    </citation>
    <scope>NUCLEOTIDE SEQUENCE [LARGE SCALE MRNA]</scope>
    <source>
        <tissue>Venom gland</tissue>
    </source>
</reference>
<organism>
    <name type="scientific">Lycosa singoriensis</name>
    <name type="common">Wolf spider</name>
    <name type="synonym">Aranea singoriensis</name>
    <dbReference type="NCBI Taxonomy" id="434756"/>
    <lineage>
        <taxon>Eukaryota</taxon>
        <taxon>Metazoa</taxon>
        <taxon>Ecdysozoa</taxon>
        <taxon>Arthropoda</taxon>
        <taxon>Chelicerata</taxon>
        <taxon>Arachnida</taxon>
        <taxon>Araneae</taxon>
        <taxon>Araneomorphae</taxon>
        <taxon>Entelegynae</taxon>
        <taxon>Lycosoidea</taxon>
        <taxon>Lycosidae</taxon>
        <taxon>Lycosa</taxon>
    </lineage>
</organism>
<protein>
    <recommendedName>
        <fullName>U8-lycotoxin-Ls1g</fullName>
    </recommendedName>
    <alternativeName>
        <fullName>Toxin-like structure LSTX-H16</fullName>
    </alternativeName>
</protein>
<dbReference type="EMBL" id="EU926071">
    <property type="protein sequence ID" value="ACI41403.1"/>
    <property type="molecule type" value="mRNA"/>
</dbReference>
<dbReference type="EMBL" id="FM864075">
    <property type="protein sequence ID" value="CAS03672.1"/>
    <property type="molecule type" value="mRNA"/>
</dbReference>
<dbReference type="SMR" id="B6DCY7"/>
<dbReference type="ArachnoServer" id="AS001010">
    <property type="toxin name" value="U8-lycotoxin-Ls1g"/>
</dbReference>
<dbReference type="GO" id="GO:0005576">
    <property type="term" value="C:extracellular region"/>
    <property type="evidence" value="ECO:0007669"/>
    <property type="project" value="UniProtKB-SubCell"/>
</dbReference>
<dbReference type="GO" id="GO:0090729">
    <property type="term" value="F:toxin activity"/>
    <property type="evidence" value="ECO:0007669"/>
    <property type="project" value="UniProtKB-KW"/>
</dbReference>
<dbReference type="InterPro" id="IPR019553">
    <property type="entry name" value="Spider_toxin_CSTX_knottin"/>
</dbReference>
<dbReference type="Pfam" id="PF10530">
    <property type="entry name" value="Toxin_35"/>
    <property type="match status" value="1"/>
</dbReference>
<sequence>MKLIIFTGLVLFAIVSLIEVQADNERACLPQYQVCTDAPGNCCSNLVCNCYGRYKSGARIGRNCFCLQKGVIYKREN</sequence>
<evidence type="ECO:0000250" key="1"/>
<evidence type="ECO:0000255" key="2"/>
<evidence type="ECO:0000305" key="3"/>
<proteinExistence type="evidence at transcript level"/>
<comment type="subcellular location">
    <subcellularLocation>
        <location evidence="1">Secreted</location>
    </subcellularLocation>
</comment>
<comment type="tissue specificity">
    <text>Expressed by the venom gland.</text>
</comment>
<comment type="PTM">
    <text evidence="1">Contains 4 disulfide bonds.</text>
</comment>
<comment type="similarity">
    <text evidence="3">Belongs to the neurotoxin 19 (CSTX) family. 08 (U8-Lctx) subfamily.</text>
</comment>
<name>TX816_LYCSI</name>